<sequence length="285" mass="32472">MNPSYKGKVRDIYDLGDKLILSSSDRISAFDVVFPQLVPDKGKVLNRISVSWFEFFKDVPNHILETDVKYFPIPFQNHPDLEGRSVLVKKCKRIDYECVVRGYISGSGWKEYKNDGTLAGIKLPSGFKESQKLPEPVFTPAVKNDQGHDENISEKEMENRIGKELFNILKEKSISIFLRASEVVDKAGIILCDTKFEFGILDGQVILIDELLTPDSSRYWSTDTYSVGISPPSLDKQILRNYLETTSWNKMPPAPNLPAELIQELREKYQKIEDLILSCTSQKSK</sequence>
<proteinExistence type="inferred from homology"/>
<evidence type="ECO:0000255" key="1">
    <source>
        <dbReference type="HAMAP-Rule" id="MF_00137"/>
    </source>
</evidence>
<organism>
    <name type="scientific">Leptospira interrogans serogroup Icterohaemorrhagiae serovar Lai (strain 56601)</name>
    <dbReference type="NCBI Taxonomy" id="189518"/>
    <lineage>
        <taxon>Bacteria</taxon>
        <taxon>Pseudomonadati</taxon>
        <taxon>Spirochaetota</taxon>
        <taxon>Spirochaetia</taxon>
        <taxon>Leptospirales</taxon>
        <taxon>Leptospiraceae</taxon>
        <taxon>Leptospira</taxon>
    </lineage>
</organism>
<feature type="chain" id="PRO_0000100838" description="Phosphoribosylaminoimidazole-succinocarboxamide synthase">
    <location>
        <begin position="1"/>
        <end position="285"/>
    </location>
</feature>
<name>PUR7_LEPIN</name>
<dbReference type="EC" id="6.3.2.6" evidence="1"/>
<dbReference type="EMBL" id="AE010300">
    <property type="protein sequence ID" value="AAN50711.1"/>
    <property type="molecule type" value="Genomic_DNA"/>
</dbReference>
<dbReference type="RefSeq" id="NP_713693.1">
    <property type="nucleotide sequence ID" value="NC_004342.2"/>
</dbReference>
<dbReference type="RefSeq" id="WP_001070066.1">
    <property type="nucleotide sequence ID" value="NC_004342.2"/>
</dbReference>
<dbReference type="SMR" id="Q8F0I0"/>
<dbReference type="FunCoup" id="Q8F0I0">
    <property type="interactions" value="446"/>
</dbReference>
<dbReference type="STRING" id="189518.LA_3513"/>
<dbReference type="PaxDb" id="189518-LA_3513"/>
<dbReference type="EnsemblBacteria" id="AAN50711">
    <property type="protein sequence ID" value="AAN50711"/>
    <property type="gene ID" value="LA_3513"/>
</dbReference>
<dbReference type="KEGG" id="lil:LA_3513"/>
<dbReference type="PATRIC" id="fig|189518.3.peg.3484"/>
<dbReference type="HOGENOM" id="CLU_045637_0_0_12"/>
<dbReference type="InParanoid" id="Q8F0I0"/>
<dbReference type="OrthoDB" id="9801549at2"/>
<dbReference type="UniPathway" id="UPA00074">
    <property type="reaction ID" value="UER00131"/>
</dbReference>
<dbReference type="Proteomes" id="UP000001408">
    <property type="component" value="Chromosome I"/>
</dbReference>
<dbReference type="GO" id="GO:0005524">
    <property type="term" value="F:ATP binding"/>
    <property type="evidence" value="ECO:0007669"/>
    <property type="project" value="UniProtKB-KW"/>
</dbReference>
<dbReference type="GO" id="GO:0004639">
    <property type="term" value="F:phosphoribosylaminoimidazolesuccinocarboxamide synthase activity"/>
    <property type="evidence" value="ECO:0000318"/>
    <property type="project" value="GO_Central"/>
</dbReference>
<dbReference type="GO" id="GO:0006189">
    <property type="term" value="P:'de novo' IMP biosynthetic process"/>
    <property type="evidence" value="ECO:0000318"/>
    <property type="project" value="GO_Central"/>
</dbReference>
<dbReference type="CDD" id="cd01414">
    <property type="entry name" value="SAICAR_synt_Sc"/>
    <property type="match status" value="1"/>
</dbReference>
<dbReference type="FunFam" id="3.30.470.20:FF:000015">
    <property type="entry name" value="Phosphoribosylaminoimidazole-succinocarboxamide synthase"/>
    <property type="match status" value="1"/>
</dbReference>
<dbReference type="Gene3D" id="3.30.470.20">
    <property type="entry name" value="ATP-grasp fold, B domain"/>
    <property type="match status" value="1"/>
</dbReference>
<dbReference type="Gene3D" id="3.30.200.20">
    <property type="entry name" value="Phosphorylase Kinase, domain 1"/>
    <property type="match status" value="1"/>
</dbReference>
<dbReference type="HAMAP" id="MF_00137">
    <property type="entry name" value="SAICAR_synth"/>
    <property type="match status" value="1"/>
</dbReference>
<dbReference type="InterPro" id="IPR028923">
    <property type="entry name" value="SAICAR_synt/ADE2_N"/>
</dbReference>
<dbReference type="InterPro" id="IPR001636">
    <property type="entry name" value="SAICAR_synth"/>
</dbReference>
<dbReference type="InterPro" id="IPR018236">
    <property type="entry name" value="SAICAR_synthetase_CS"/>
</dbReference>
<dbReference type="NCBIfam" id="NF010568">
    <property type="entry name" value="PRK13961.1"/>
    <property type="match status" value="1"/>
</dbReference>
<dbReference type="NCBIfam" id="TIGR00081">
    <property type="entry name" value="purC"/>
    <property type="match status" value="1"/>
</dbReference>
<dbReference type="PANTHER" id="PTHR43700">
    <property type="entry name" value="PHOSPHORIBOSYLAMINOIMIDAZOLE-SUCCINOCARBOXAMIDE SYNTHASE"/>
    <property type="match status" value="1"/>
</dbReference>
<dbReference type="PANTHER" id="PTHR43700:SF1">
    <property type="entry name" value="PHOSPHORIBOSYLAMINOIMIDAZOLE-SUCCINOCARBOXAMIDE SYNTHASE"/>
    <property type="match status" value="1"/>
</dbReference>
<dbReference type="Pfam" id="PF01259">
    <property type="entry name" value="SAICAR_synt"/>
    <property type="match status" value="1"/>
</dbReference>
<dbReference type="SUPFAM" id="SSF56104">
    <property type="entry name" value="SAICAR synthase-like"/>
    <property type="match status" value="1"/>
</dbReference>
<dbReference type="PROSITE" id="PS01058">
    <property type="entry name" value="SAICAR_SYNTHETASE_2"/>
    <property type="match status" value="1"/>
</dbReference>
<accession>Q8F0I0</accession>
<comment type="catalytic activity">
    <reaction evidence="1">
        <text>5-amino-1-(5-phospho-D-ribosyl)imidazole-4-carboxylate + L-aspartate + ATP = (2S)-2-[5-amino-1-(5-phospho-beta-D-ribosyl)imidazole-4-carboxamido]succinate + ADP + phosphate + 2 H(+)</text>
        <dbReference type="Rhea" id="RHEA:22628"/>
        <dbReference type="ChEBI" id="CHEBI:15378"/>
        <dbReference type="ChEBI" id="CHEBI:29991"/>
        <dbReference type="ChEBI" id="CHEBI:30616"/>
        <dbReference type="ChEBI" id="CHEBI:43474"/>
        <dbReference type="ChEBI" id="CHEBI:58443"/>
        <dbReference type="ChEBI" id="CHEBI:77657"/>
        <dbReference type="ChEBI" id="CHEBI:456216"/>
        <dbReference type="EC" id="6.3.2.6"/>
    </reaction>
</comment>
<comment type="pathway">
    <text evidence="1">Purine metabolism; IMP biosynthesis via de novo pathway; 5-amino-1-(5-phospho-D-ribosyl)imidazole-4-carboxamide from 5-amino-1-(5-phospho-D-ribosyl)imidazole-4-carboxylate: step 1/2.</text>
</comment>
<comment type="similarity">
    <text evidence="1">Belongs to the SAICAR synthetase family.</text>
</comment>
<reference key="1">
    <citation type="journal article" date="2003" name="Nature">
        <title>Unique physiological and pathogenic features of Leptospira interrogans revealed by whole-genome sequencing.</title>
        <authorList>
            <person name="Ren S.-X."/>
            <person name="Fu G."/>
            <person name="Jiang X.-G."/>
            <person name="Zeng R."/>
            <person name="Miao Y.-G."/>
            <person name="Xu H."/>
            <person name="Zhang Y.-X."/>
            <person name="Xiong H."/>
            <person name="Lu G."/>
            <person name="Lu L.-F."/>
            <person name="Jiang H.-Q."/>
            <person name="Jia J."/>
            <person name="Tu Y.-F."/>
            <person name="Jiang J.-X."/>
            <person name="Gu W.-Y."/>
            <person name="Zhang Y.-Q."/>
            <person name="Cai Z."/>
            <person name="Sheng H.-H."/>
            <person name="Yin H.-F."/>
            <person name="Zhang Y."/>
            <person name="Zhu G.-F."/>
            <person name="Wan M."/>
            <person name="Huang H.-L."/>
            <person name="Qian Z."/>
            <person name="Wang S.-Y."/>
            <person name="Ma W."/>
            <person name="Yao Z.-J."/>
            <person name="Shen Y."/>
            <person name="Qiang B.-Q."/>
            <person name="Xia Q.-C."/>
            <person name="Guo X.-K."/>
            <person name="Danchin A."/>
            <person name="Saint Girons I."/>
            <person name="Somerville R.L."/>
            <person name="Wen Y.-M."/>
            <person name="Shi M.-H."/>
            <person name="Chen Z."/>
            <person name="Xu J.-G."/>
            <person name="Zhao G.-P."/>
        </authorList>
    </citation>
    <scope>NUCLEOTIDE SEQUENCE [LARGE SCALE GENOMIC DNA]</scope>
    <source>
        <strain>56601</strain>
    </source>
</reference>
<gene>
    <name evidence="1" type="primary">purC</name>
    <name type="ordered locus">LA_3513</name>
</gene>
<keyword id="KW-0067">ATP-binding</keyword>
<keyword id="KW-0436">Ligase</keyword>
<keyword id="KW-0547">Nucleotide-binding</keyword>
<keyword id="KW-0658">Purine biosynthesis</keyword>
<keyword id="KW-1185">Reference proteome</keyword>
<protein>
    <recommendedName>
        <fullName evidence="1">Phosphoribosylaminoimidazole-succinocarboxamide synthase</fullName>
        <ecNumber evidence="1">6.3.2.6</ecNumber>
    </recommendedName>
    <alternativeName>
        <fullName evidence="1">SAICAR synthetase</fullName>
    </alternativeName>
</protein>